<accession>Q73UD4</accession>
<dbReference type="EMBL" id="AE016958">
    <property type="protein sequence ID" value="AAS05984.1"/>
    <property type="molecule type" value="Genomic_DNA"/>
</dbReference>
<dbReference type="SMR" id="Q73UD4"/>
<dbReference type="STRING" id="262316.MAP_3434"/>
<dbReference type="KEGG" id="mpa:MAP_3434"/>
<dbReference type="eggNOG" id="COG2304">
    <property type="taxonomic scope" value="Bacteria"/>
</dbReference>
<dbReference type="HOGENOM" id="CLU_024570_2_0_11"/>
<dbReference type="Proteomes" id="UP000000580">
    <property type="component" value="Chromosome"/>
</dbReference>
<dbReference type="GO" id="GO:0005886">
    <property type="term" value="C:plasma membrane"/>
    <property type="evidence" value="ECO:0007669"/>
    <property type="project" value="UniProtKB-SubCell"/>
</dbReference>
<dbReference type="Gene3D" id="3.40.50.410">
    <property type="entry name" value="von Willebrand factor, type A domain"/>
    <property type="match status" value="1"/>
</dbReference>
<dbReference type="HAMAP" id="MF_01340">
    <property type="entry name" value="UPF0353"/>
    <property type="match status" value="1"/>
</dbReference>
<dbReference type="InterPro" id="IPR022933">
    <property type="entry name" value="UPF0353"/>
</dbReference>
<dbReference type="InterPro" id="IPR050768">
    <property type="entry name" value="UPF0353/GerABKA_families"/>
</dbReference>
<dbReference type="InterPro" id="IPR002035">
    <property type="entry name" value="VWF_A"/>
</dbReference>
<dbReference type="InterPro" id="IPR036465">
    <property type="entry name" value="vWFA_dom_sf"/>
</dbReference>
<dbReference type="NCBIfam" id="NF010238">
    <property type="entry name" value="PRK13685.1"/>
    <property type="match status" value="1"/>
</dbReference>
<dbReference type="PANTHER" id="PTHR22550:SF5">
    <property type="entry name" value="LEUCINE ZIPPER PROTEIN 4"/>
    <property type="match status" value="1"/>
</dbReference>
<dbReference type="PANTHER" id="PTHR22550">
    <property type="entry name" value="SPORE GERMINATION PROTEIN"/>
    <property type="match status" value="1"/>
</dbReference>
<dbReference type="Pfam" id="PF13519">
    <property type="entry name" value="VWA_2"/>
    <property type="match status" value="1"/>
</dbReference>
<dbReference type="SMART" id="SM00327">
    <property type="entry name" value="VWA"/>
    <property type="match status" value="1"/>
</dbReference>
<dbReference type="SUPFAM" id="SSF53300">
    <property type="entry name" value="vWA-like"/>
    <property type="match status" value="1"/>
</dbReference>
<dbReference type="PROSITE" id="PS50234">
    <property type="entry name" value="VWFA"/>
    <property type="match status" value="1"/>
</dbReference>
<gene>
    <name type="ordered locus">MAP_3434</name>
</gene>
<evidence type="ECO:0000255" key="1">
    <source>
        <dbReference type="HAMAP-Rule" id="MF_01340"/>
    </source>
</evidence>
<organism>
    <name type="scientific">Mycolicibacterium paratuberculosis (strain ATCC BAA-968 / K-10)</name>
    <name type="common">Mycobacterium paratuberculosis</name>
    <dbReference type="NCBI Taxonomy" id="262316"/>
    <lineage>
        <taxon>Bacteria</taxon>
        <taxon>Bacillati</taxon>
        <taxon>Actinomycetota</taxon>
        <taxon>Actinomycetes</taxon>
        <taxon>Mycobacteriales</taxon>
        <taxon>Mycobacteriaceae</taxon>
        <taxon>Mycobacterium</taxon>
        <taxon>Mycobacterium avium complex (MAC)</taxon>
    </lineage>
</organism>
<proteinExistence type="inferred from homology"/>
<comment type="subcellular location">
    <subcellularLocation>
        <location evidence="1">Cell membrane</location>
        <topology evidence="1">Multi-pass membrane protein</topology>
    </subcellularLocation>
</comment>
<comment type="similarity">
    <text evidence="1">Belongs to the UPF0353 family.</text>
</comment>
<sequence length="330" mass="34988">MGVVSLPGIGPLPLYGFQRPGMLLFGLVPLALLALYLVVQARRRRRLHRYTDAPVAQSPWRHLPIAVSLLSLVLLTIALATPTHDMRIPRNRAVIMLVIDMSQSMRATDVEPNRLKAAEQAASQFASQLTPGINLGLVGFAGTPYLLVPPTPQHQATIDALKKLDFADSTATGEAIFTALHAISATAVAGGDTPPPARIVLLSDGGENKPSNPSDPHDGVYTAARLAKDEGVPISTITFGTKGGEIEMDGQKVAVPVSTDQMKMVAKLSGGQSYTATNLGELQKSYNAIENEIGYRTVPGPGSAGWLRLGVLTALIATALALLINRRLPT</sequence>
<reference key="1">
    <citation type="journal article" date="2005" name="Proc. Natl. Acad. Sci. U.S.A.">
        <title>The complete genome sequence of Mycobacterium avium subspecies paratuberculosis.</title>
        <authorList>
            <person name="Li L."/>
            <person name="Bannantine J.P."/>
            <person name="Zhang Q."/>
            <person name="Amonsin A."/>
            <person name="May B.J."/>
            <person name="Alt D."/>
            <person name="Banerji N."/>
            <person name="Kanjilal S."/>
            <person name="Kapur V."/>
        </authorList>
    </citation>
    <scope>NUCLEOTIDE SEQUENCE [LARGE SCALE GENOMIC DNA]</scope>
    <source>
        <strain>ATCC BAA-968 / K-10</strain>
    </source>
</reference>
<protein>
    <recommendedName>
        <fullName evidence="1">UPF0353 protein MAP_3434</fullName>
    </recommendedName>
</protein>
<name>Y3434_MYCPA</name>
<feature type="chain" id="PRO_0000057646" description="UPF0353 protein MAP_3434">
    <location>
        <begin position="1"/>
        <end position="330"/>
    </location>
</feature>
<feature type="transmembrane region" description="Helical" evidence="1">
    <location>
        <begin position="21"/>
        <end position="41"/>
    </location>
</feature>
<feature type="transmembrane region" description="Helical" evidence="1">
    <location>
        <begin position="63"/>
        <end position="83"/>
    </location>
</feature>
<feature type="transmembrane region" description="Helical" evidence="1">
    <location>
        <begin position="304"/>
        <end position="324"/>
    </location>
</feature>
<feature type="domain" description="VWFA" evidence="1">
    <location>
        <begin position="94"/>
        <end position="289"/>
    </location>
</feature>
<keyword id="KW-1003">Cell membrane</keyword>
<keyword id="KW-0472">Membrane</keyword>
<keyword id="KW-1185">Reference proteome</keyword>
<keyword id="KW-0812">Transmembrane</keyword>
<keyword id="KW-1133">Transmembrane helix</keyword>